<organism>
    <name type="scientific">Bacillus anthracis (strain CDC 684 / NRRL 3495)</name>
    <dbReference type="NCBI Taxonomy" id="568206"/>
    <lineage>
        <taxon>Bacteria</taxon>
        <taxon>Bacillati</taxon>
        <taxon>Bacillota</taxon>
        <taxon>Bacilli</taxon>
        <taxon>Bacillales</taxon>
        <taxon>Bacillaceae</taxon>
        <taxon>Bacillus</taxon>
        <taxon>Bacillus cereus group</taxon>
    </lineage>
</organism>
<evidence type="ECO:0000255" key="1">
    <source>
        <dbReference type="HAMAP-Rule" id="MF_00098"/>
    </source>
</evidence>
<keyword id="KW-0030">Aminoacyl-tRNA synthetase</keyword>
<keyword id="KW-0067">ATP-binding</keyword>
<keyword id="KW-0963">Cytoplasm</keyword>
<keyword id="KW-0436">Ligase</keyword>
<keyword id="KW-0479">Metal-binding</keyword>
<keyword id="KW-0547">Nucleotide-binding</keyword>
<keyword id="KW-0648">Protein biosynthesis</keyword>
<keyword id="KW-0862">Zinc</keyword>
<name>SYM_BACAC</name>
<dbReference type="EC" id="6.1.1.10" evidence="1"/>
<dbReference type="EMBL" id="CP001215">
    <property type="protein sequence ID" value="ACP15993.1"/>
    <property type="molecule type" value="Genomic_DNA"/>
</dbReference>
<dbReference type="RefSeq" id="WP_000021567.1">
    <property type="nucleotide sequence ID" value="NC_012581.1"/>
</dbReference>
<dbReference type="SMR" id="C3LD96"/>
<dbReference type="GeneID" id="45024892"/>
<dbReference type="KEGG" id="bah:BAMEG_5331"/>
<dbReference type="HOGENOM" id="CLU_009710_1_2_9"/>
<dbReference type="GO" id="GO:0005829">
    <property type="term" value="C:cytosol"/>
    <property type="evidence" value="ECO:0007669"/>
    <property type="project" value="TreeGrafter"/>
</dbReference>
<dbReference type="GO" id="GO:0005524">
    <property type="term" value="F:ATP binding"/>
    <property type="evidence" value="ECO:0007669"/>
    <property type="project" value="UniProtKB-UniRule"/>
</dbReference>
<dbReference type="GO" id="GO:0046872">
    <property type="term" value="F:metal ion binding"/>
    <property type="evidence" value="ECO:0007669"/>
    <property type="project" value="UniProtKB-KW"/>
</dbReference>
<dbReference type="GO" id="GO:0004825">
    <property type="term" value="F:methionine-tRNA ligase activity"/>
    <property type="evidence" value="ECO:0007669"/>
    <property type="project" value="UniProtKB-UniRule"/>
</dbReference>
<dbReference type="GO" id="GO:0006431">
    <property type="term" value="P:methionyl-tRNA aminoacylation"/>
    <property type="evidence" value="ECO:0007669"/>
    <property type="project" value="UniProtKB-UniRule"/>
</dbReference>
<dbReference type="CDD" id="cd07957">
    <property type="entry name" value="Anticodon_Ia_Met"/>
    <property type="match status" value="1"/>
</dbReference>
<dbReference type="CDD" id="cd00814">
    <property type="entry name" value="MetRS_core"/>
    <property type="match status" value="1"/>
</dbReference>
<dbReference type="FunFam" id="1.10.730.10:FF:000041">
    <property type="entry name" value="Methionine--tRNA ligase"/>
    <property type="match status" value="1"/>
</dbReference>
<dbReference type="FunFam" id="2.20.28.20:FF:000001">
    <property type="entry name" value="Methionine--tRNA ligase"/>
    <property type="match status" value="1"/>
</dbReference>
<dbReference type="Gene3D" id="3.40.50.620">
    <property type="entry name" value="HUPs"/>
    <property type="match status" value="1"/>
</dbReference>
<dbReference type="Gene3D" id="1.10.730.10">
    <property type="entry name" value="Isoleucyl-tRNA Synthetase, Domain 1"/>
    <property type="match status" value="1"/>
</dbReference>
<dbReference type="Gene3D" id="2.20.28.20">
    <property type="entry name" value="Methionyl-tRNA synthetase, Zn-domain"/>
    <property type="match status" value="1"/>
</dbReference>
<dbReference type="HAMAP" id="MF_00098">
    <property type="entry name" value="Met_tRNA_synth_type1"/>
    <property type="match status" value="1"/>
</dbReference>
<dbReference type="InterPro" id="IPR001412">
    <property type="entry name" value="aa-tRNA-synth_I_CS"/>
</dbReference>
<dbReference type="InterPro" id="IPR041872">
    <property type="entry name" value="Anticodon_Met"/>
</dbReference>
<dbReference type="InterPro" id="IPR023458">
    <property type="entry name" value="Met-tRNA_ligase_1"/>
</dbReference>
<dbReference type="InterPro" id="IPR014758">
    <property type="entry name" value="Met-tRNA_synth"/>
</dbReference>
<dbReference type="InterPro" id="IPR015413">
    <property type="entry name" value="Methionyl/Leucyl_tRNA_Synth"/>
</dbReference>
<dbReference type="InterPro" id="IPR033911">
    <property type="entry name" value="MetRS_core"/>
</dbReference>
<dbReference type="InterPro" id="IPR029038">
    <property type="entry name" value="MetRS_Zn"/>
</dbReference>
<dbReference type="InterPro" id="IPR014729">
    <property type="entry name" value="Rossmann-like_a/b/a_fold"/>
</dbReference>
<dbReference type="InterPro" id="IPR009080">
    <property type="entry name" value="tRNAsynth_Ia_anticodon-bd"/>
</dbReference>
<dbReference type="NCBIfam" id="TIGR00398">
    <property type="entry name" value="metG"/>
    <property type="match status" value="1"/>
</dbReference>
<dbReference type="PANTHER" id="PTHR45765">
    <property type="entry name" value="METHIONINE--TRNA LIGASE"/>
    <property type="match status" value="1"/>
</dbReference>
<dbReference type="PANTHER" id="PTHR45765:SF1">
    <property type="entry name" value="METHIONINE--TRNA LIGASE, CYTOPLASMIC"/>
    <property type="match status" value="1"/>
</dbReference>
<dbReference type="Pfam" id="PF19303">
    <property type="entry name" value="Anticodon_3"/>
    <property type="match status" value="1"/>
</dbReference>
<dbReference type="Pfam" id="PF09334">
    <property type="entry name" value="tRNA-synt_1g"/>
    <property type="match status" value="1"/>
</dbReference>
<dbReference type="PRINTS" id="PR01041">
    <property type="entry name" value="TRNASYNTHMET"/>
</dbReference>
<dbReference type="SUPFAM" id="SSF47323">
    <property type="entry name" value="Anticodon-binding domain of a subclass of class I aminoacyl-tRNA synthetases"/>
    <property type="match status" value="1"/>
</dbReference>
<dbReference type="SUPFAM" id="SSF57770">
    <property type="entry name" value="Methionyl-tRNA synthetase (MetRS), Zn-domain"/>
    <property type="match status" value="1"/>
</dbReference>
<dbReference type="SUPFAM" id="SSF52374">
    <property type="entry name" value="Nucleotidylyl transferase"/>
    <property type="match status" value="1"/>
</dbReference>
<dbReference type="PROSITE" id="PS00178">
    <property type="entry name" value="AA_TRNA_LIGASE_I"/>
    <property type="match status" value="1"/>
</dbReference>
<proteinExistence type="inferred from homology"/>
<sequence>MSIFIGGAWPYANGSLHLGHIASLLPGDILARYYRAKGENVLYVSGSDCNGTPIAIRAKQEGVTAKEIANKYHEEFERCFRNLGFTYDCYTRTDSEHHHETVQNVFLRLLEEGHIYKKTVEQAYCETCTQFLPDCYVEGVCPHCHEEARGDQCDACSAILDPLDLLEKKCKLCGSTPSIQETEHFYFALHTFQEQIKRAVEIAKQTGTWRDNAIQLTERYVKEGLLDRAVSRDLPIGVPIPVEGYEDKKIYVWIEAVTGYYSASKHWAEETGKDDREFWDGEAKTYYVHGKDNIPFHSVIWPAVLLGIGEGTIPRHIVSNEYLTVEKRKLSTSKNWAVWVPDILERYDPDSIRYFLIVNAPENRDTDFSWREFIYSHNSELLGAYGNFVNRTLKFIEKYYGGIMPKGSIDVELKDKIERLYKHVGEAIEQTKFKVALESIFDAVRFANKYFDERQPWKEREDDPVSCEETIYNCVYLIANFANLLEPFLPFSSERIRNTLSIVNRNWEPQHTLPSRIDSVQPLFERIDVKQIECELEKLYGAVK</sequence>
<accession>C3LD96</accession>
<reference key="1">
    <citation type="submission" date="2008-10" db="EMBL/GenBank/DDBJ databases">
        <title>Genome sequence of Bacillus anthracis str. CDC 684.</title>
        <authorList>
            <person name="Dodson R.J."/>
            <person name="Munk A.C."/>
            <person name="Brettin T."/>
            <person name="Bruce D."/>
            <person name="Detter C."/>
            <person name="Tapia R."/>
            <person name="Han C."/>
            <person name="Sutton G."/>
            <person name="Sims D."/>
        </authorList>
    </citation>
    <scope>NUCLEOTIDE SEQUENCE [LARGE SCALE GENOMIC DNA]</scope>
    <source>
        <strain>CDC 684 / NRRL 3495</strain>
    </source>
</reference>
<gene>
    <name evidence="1" type="primary">metG</name>
    <name type="ordered locus">BAMEG_5331</name>
</gene>
<comment type="function">
    <text evidence="1">Is required not only for elongation of protein synthesis but also for the initiation of all mRNA translation through initiator tRNA(fMet) aminoacylation.</text>
</comment>
<comment type="catalytic activity">
    <reaction evidence="1">
        <text>tRNA(Met) + L-methionine + ATP = L-methionyl-tRNA(Met) + AMP + diphosphate</text>
        <dbReference type="Rhea" id="RHEA:13481"/>
        <dbReference type="Rhea" id="RHEA-COMP:9667"/>
        <dbReference type="Rhea" id="RHEA-COMP:9698"/>
        <dbReference type="ChEBI" id="CHEBI:30616"/>
        <dbReference type="ChEBI" id="CHEBI:33019"/>
        <dbReference type="ChEBI" id="CHEBI:57844"/>
        <dbReference type="ChEBI" id="CHEBI:78442"/>
        <dbReference type="ChEBI" id="CHEBI:78530"/>
        <dbReference type="ChEBI" id="CHEBI:456215"/>
        <dbReference type="EC" id="6.1.1.10"/>
    </reaction>
</comment>
<comment type="cofactor">
    <cofactor evidence="1">
        <name>Zn(2+)</name>
        <dbReference type="ChEBI" id="CHEBI:29105"/>
    </cofactor>
    <text evidence="1">Binds 1 zinc ion per subunit.</text>
</comment>
<comment type="subunit">
    <text evidence="1">Monomer.</text>
</comment>
<comment type="subcellular location">
    <subcellularLocation>
        <location evidence="1">Cytoplasm</location>
    </subcellularLocation>
</comment>
<comment type="similarity">
    <text evidence="1">Belongs to the class-I aminoacyl-tRNA synthetase family. MetG type 1 subfamily.</text>
</comment>
<feature type="chain" id="PRO_1000199271" description="Methionine--tRNA ligase">
    <location>
        <begin position="1"/>
        <end position="544"/>
    </location>
</feature>
<feature type="short sequence motif" description="'HIGH' region">
    <location>
        <begin position="10"/>
        <end position="20"/>
    </location>
</feature>
<feature type="short sequence motif" description="'KMSKS' region">
    <location>
        <begin position="329"/>
        <end position="333"/>
    </location>
</feature>
<feature type="binding site" evidence="1">
    <location>
        <position position="141"/>
    </location>
    <ligand>
        <name>Zn(2+)</name>
        <dbReference type="ChEBI" id="CHEBI:29105"/>
    </ligand>
</feature>
<feature type="binding site" evidence="1">
    <location>
        <position position="144"/>
    </location>
    <ligand>
        <name>Zn(2+)</name>
        <dbReference type="ChEBI" id="CHEBI:29105"/>
    </ligand>
</feature>
<feature type="binding site" evidence="1">
    <location>
        <position position="153"/>
    </location>
    <ligand>
        <name>Zn(2+)</name>
        <dbReference type="ChEBI" id="CHEBI:29105"/>
    </ligand>
</feature>
<feature type="binding site" evidence="1">
    <location>
        <position position="156"/>
    </location>
    <ligand>
        <name>Zn(2+)</name>
        <dbReference type="ChEBI" id="CHEBI:29105"/>
    </ligand>
</feature>
<feature type="binding site" evidence="1">
    <location>
        <position position="332"/>
    </location>
    <ligand>
        <name>ATP</name>
        <dbReference type="ChEBI" id="CHEBI:30616"/>
    </ligand>
</feature>
<protein>
    <recommendedName>
        <fullName evidence="1">Methionine--tRNA ligase</fullName>
        <ecNumber evidence="1">6.1.1.10</ecNumber>
    </recommendedName>
    <alternativeName>
        <fullName evidence="1">Methionyl-tRNA synthetase</fullName>
        <shortName evidence="1">MetRS</shortName>
    </alternativeName>
</protein>